<accession>P53824</accession>
<accession>D6W0L4</accession>
<feature type="chain" id="PRO_0000109359" description="Probable pyridoxal 5'-phosphate synthase subunit SNZ2">
    <location>
        <begin position="1"/>
        <end position="298"/>
    </location>
</feature>
<feature type="active site" description="Schiff-base intermediate with D-ribose 5-phosphate" evidence="1">
    <location>
        <position position="78"/>
    </location>
</feature>
<feature type="binding site" evidence="1">
    <location>
        <position position="21"/>
    </location>
    <ligand>
        <name>D-ribose 5-phosphate</name>
        <dbReference type="ChEBI" id="CHEBI:78346"/>
    </ligand>
</feature>
<feature type="binding site" evidence="1">
    <location>
        <position position="150"/>
    </location>
    <ligand>
        <name>D-ribose 5-phosphate</name>
        <dbReference type="ChEBI" id="CHEBI:78346"/>
    </ligand>
</feature>
<feature type="binding site" evidence="1">
    <location>
        <position position="213"/>
    </location>
    <ligand>
        <name>D-ribose 5-phosphate</name>
        <dbReference type="ChEBI" id="CHEBI:78346"/>
    </ligand>
</feature>
<feature type="binding site" evidence="1">
    <location>
        <begin position="234"/>
        <end position="235"/>
    </location>
    <ligand>
        <name>D-ribose 5-phosphate</name>
        <dbReference type="ChEBI" id="CHEBI:78346"/>
    </ligand>
</feature>
<dbReference type="EC" id="4.3.3.6"/>
<dbReference type="EMBL" id="Z71608">
    <property type="protein sequence ID" value="CAA96266.1"/>
    <property type="molecule type" value="Genomic_DNA"/>
</dbReference>
<dbReference type="EMBL" id="Z71609">
    <property type="protein sequence ID" value="CAA96267.1"/>
    <property type="molecule type" value="Genomic_DNA"/>
</dbReference>
<dbReference type="EMBL" id="AY692873">
    <property type="protein sequence ID" value="AAT92892.1"/>
    <property type="molecule type" value="Genomic_DNA"/>
</dbReference>
<dbReference type="EMBL" id="BK006947">
    <property type="protein sequence ID" value="DAA10230.1"/>
    <property type="molecule type" value="Genomic_DNA"/>
</dbReference>
<dbReference type="RefSeq" id="NP_014066.1">
    <property type="nucleotide sequence ID" value="NM_001183171.1"/>
</dbReference>
<dbReference type="SMR" id="P53824"/>
<dbReference type="BioGRID" id="35508">
    <property type="interactions" value="29"/>
</dbReference>
<dbReference type="DIP" id="DIP-1695N"/>
<dbReference type="FunCoup" id="P53824">
    <property type="interactions" value="322"/>
</dbReference>
<dbReference type="IntAct" id="P53824">
    <property type="interactions" value="12"/>
</dbReference>
<dbReference type="MINT" id="P53824"/>
<dbReference type="STRING" id="4932.YNL333W"/>
<dbReference type="PaxDb" id="4932-YNL333W"/>
<dbReference type="PeptideAtlas" id="P53824"/>
<dbReference type="EnsemblFungi" id="YNL333W_mRNA">
    <property type="protein sequence ID" value="YNL333W"/>
    <property type="gene ID" value="YNL333W"/>
</dbReference>
<dbReference type="GeneID" id="855383"/>
<dbReference type="KEGG" id="sce:YNL333W"/>
<dbReference type="AGR" id="SGD:S000005277"/>
<dbReference type="SGD" id="S000005277">
    <property type="gene designation" value="SNZ2"/>
</dbReference>
<dbReference type="VEuPathDB" id="FungiDB:YNL333W"/>
<dbReference type="eggNOG" id="KOG1606">
    <property type="taxonomic scope" value="Eukaryota"/>
</dbReference>
<dbReference type="GeneTree" id="ENSGT00390000018460"/>
<dbReference type="HOGENOM" id="CLU_055352_1_0_1"/>
<dbReference type="InParanoid" id="P53824"/>
<dbReference type="OMA" id="MTERGTW"/>
<dbReference type="OrthoDB" id="1660966at2759"/>
<dbReference type="BioCyc" id="YEAST:G3O-33316-MONOMER"/>
<dbReference type="UniPathway" id="UPA00245"/>
<dbReference type="BioGRID-ORCS" id="855383">
    <property type="hits" value="0 hits in 10 CRISPR screens"/>
</dbReference>
<dbReference type="PRO" id="PR:P53824"/>
<dbReference type="Proteomes" id="UP000002311">
    <property type="component" value="Chromosome XIV"/>
</dbReference>
<dbReference type="RNAct" id="P53824">
    <property type="molecule type" value="protein"/>
</dbReference>
<dbReference type="GO" id="GO:0016843">
    <property type="term" value="F:amine-lyase activity"/>
    <property type="evidence" value="ECO:0000318"/>
    <property type="project" value="GO_Central"/>
</dbReference>
<dbReference type="GO" id="GO:0003922">
    <property type="term" value="F:GMP synthase (glutamine-hydrolyzing) activity"/>
    <property type="evidence" value="ECO:0000250"/>
    <property type="project" value="SGD"/>
</dbReference>
<dbReference type="GO" id="GO:0036381">
    <property type="term" value="F:pyridoxal 5'-phosphate synthase (glutamine hydrolysing) activity"/>
    <property type="evidence" value="ECO:0007669"/>
    <property type="project" value="UniProtKB-EC"/>
</dbReference>
<dbReference type="GO" id="GO:0006520">
    <property type="term" value="P:amino acid metabolic process"/>
    <property type="evidence" value="ECO:0000318"/>
    <property type="project" value="GO_Central"/>
</dbReference>
<dbReference type="GO" id="GO:0042823">
    <property type="term" value="P:pyridoxal phosphate biosynthetic process"/>
    <property type="evidence" value="ECO:0000318"/>
    <property type="project" value="GO_Central"/>
</dbReference>
<dbReference type="GO" id="GO:0008615">
    <property type="term" value="P:pyridoxine biosynthetic process"/>
    <property type="evidence" value="ECO:0000316"/>
    <property type="project" value="SGD"/>
</dbReference>
<dbReference type="GO" id="GO:0009228">
    <property type="term" value="P:thiamine biosynthetic process"/>
    <property type="evidence" value="ECO:0000316"/>
    <property type="project" value="SGD"/>
</dbReference>
<dbReference type="GO" id="GO:0042819">
    <property type="term" value="P:vitamin B6 biosynthetic process"/>
    <property type="evidence" value="ECO:0000316"/>
    <property type="project" value="SGD"/>
</dbReference>
<dbReference type="CDD" id="cd04727">
    <property type="entry name" value="pdxS"/>
    <property type="match status" value="1"/>
</dbReference>
<dbReference type="FunFam" id="3.20.20.70:FF:000001">
    <property type="entry name" value="Pyridoxine biosynthesis protein PDX1"/>
    <property type="match status" value="1"/>
</dbReference>
<dbReference type="Gene3D" id="3.20.20.70">
    <property type="entry name" value="Aldolase class I"/>
    <property type="match status" value="1"/>
</dbReference>
<dbReference type="HAMAP" id="MF_01824">
    <property type="entry name" value="PdxS"/>
    <property type="match status" value="1"/>
</dbReference>
<dbReference type="InterPro" id="IPR013785">
    <property type="entry name" value="Aldolase_TIM"/>
</dbReference>
<dbReference type="InterPro" id="IPR001852">
    <property type="entry name" value="PdxS/SNZ"/>
</dbReference>
<dbReference type="InterPro" id="IPR033755">
    <property type="entry name" value="PdxS/SNZ_N"/>
</dbReference>
<dbReference type="InterPro" id="IPR011060">
    <property type="entry name" value="RibuloseP-bd_barrel"/>
</dbReference>
<dbReference type="NCBIfam" id="NF003215">
    <property type="entry name" value="PRK04180.1"/>
    <property type="match status" value="1"/>
</dbReference>
<dbReference type="NCBIfam" id="TIGR00343">
    <property type="entry name" value="pyridoxal 5'-phosphate synthase lyase subunit PdxS"/>
    <property type="match status" value="1"/>
</dbReference>
<dbReference type="PANTHER" id="PTHR31829">
    <property type="entry name" value="PYRIDOXAL 5'-PHOSPHATE SYNTHASE SUBUNIT SNZ1-RELATED"/>
    <property type="match status" value="1"/>
</dbReference>
<dbReference type="PANTHER" id="PTHR31829:SF0">
    <property type="entry name" value="PYRIDOXAL 5'-PHOSPHATE SYNTHASE SUBUNIT SNZ1-RELATED"/>
    <property type="match status" value="1"/>
</dbReference>
<dbReference type="Pfam" id="PF01680">
    <property type="entry name" value="SOR_SNZ"/>
    <property type="match status" value="1"/>
</dbReference>
<dbReference type="PIRSF" id="PIRSF029271">
    <property type="entry name" value="Pdx1"/>
    <property type="match status" value="1"/>
</dbReference>
<dbReference type="SUPFAM" id="SSF51366">
    <property type="entry name" value="Ribulose-phoshate binding barrel"/>
    <property type="match status" value="1"/>
</dbReference>
<dbReference type="PROSITE" id="PS01235">
    <property type="entry name" value="PDXS_SNZ_1"/>
    <property type="match status" value="1"/>
</dbReference>
<dbReference type="PROSITE" id="PS51129">
    <property type="entry name" value="PDXS_SNZ_2"/>
    <property type="match status" value="1"/>
</dbReference>
<evidence type="ECO:0000250" key="1">
    <source>
        <dbReference type="UniProtKB" id="O59080"/>
    </source>
</evidence>
<evidence type="ECO:0000250" key="2">
    <source>
        <dbReference type="UniProtKB" id="Q03148"/>
    </source>
</evidence>
<evidence type="ECO:0000269" key="3">
    <source>
    </source>
</evidence>
<evidence type="ECO:0000305" key="4"/>
<proteinExistence type="evidence at protein level"/>
<keyword id="KW-0456">Lyase</keyword>
<keyword id="KW-0663">Pyridoxal phosphate</keyword>
<keyword id="KW-1185">Reference proteome</keyword>
<keyword id="KW-0704">Schiff base</keyword>
<reference key="1">
    <citation type="journal article" date="1997" name="Nature">
        <title>The nucleotide sequence of Saccharomyces cerevisiae chromosome XIV and its evolutionary implications.</title>
        <authorList>
            <person name="Philippsen P."/>
            <person name="Kleine K."/>
            <person name="Poehlmann R."/>
            <person name="Duesterhoeft A."/>
            <person name="Hamberg K."/>
            <person name="Hegemann J.H."/>
            <person name="Obermaier B."/>
            <person name="Urrestarazu L.A."/>
            <person name="Aert R."/>
            <person name="Albermann K."/>
            <person name="Altmann R."/>
            <person name="Andre B."/>
            <person name="Baladron V."/>
            <person name="Ballesta J.P.G."/>
            <person name="Becam A.-M."/>
            <person name="Beinhauer J.D."/>
            <person name="Boskovic J."/>
            <person name="Buitrago M.J."/>
            <person name="Bussereau F."/>
            <person name="Coster F."/>
            <person name="Crouzet M."/>
            <person name="D'Angelo M."/>
            <person name="Dal Pero F."/>
            <person name="De Antoni A."/>
            <person name="del Rey F."/>
            <person name="Doignon F."/>
            <person name="Domdey H."/>
            <person name="Dubois E."/>
            <person name="Fiedler T.A."/>
            <person name="Fleig U."/>
            <person name="Floeth M."/>
            <person name="Fritz C."/>
            <person name="Gaillardin C."/>
            <person name="Garcia-Cantalejo J.M."/>
            <person name="Glansdorff N."/>
            <person name="Goffeau A."/>
            <person name="Gueldener U."/>
            <person name="Herbert C.J."/>
            <person name="Heumann K."/>
            <person name="Heuss-Neitzel D."/>
            <person name="Hilbert H."/>
            <person name="Hinni K."/>
            <person name="Iraqui Houssaini I."/>
            <person name="Jacquet M."/>
            <person name="Jimenez A."/>
            <person name="Jonniaux J.-L."/>
            <person name="Karpfinger-Hartl L."/>
            <person name="Lanfranchi G."/>
            <person name="Lepingle A."/>
            <person name="Levesque H."/>
            <person name="Lyck R."/>
            <person name="Maftahi M."/>
            <person name="Mallet L."/>
            <person name="Maurer C.T.C."/>
            <person name="Messenguy F."/>
            <person name="Mewes H.-W."/>
            <person name="Moestl D."/>
            <person name="Nasr F."/>
            <person name="Nicaud J.-M."/>
            <person name="Niedenthal R.K."/>
            <person name="Pandolfo D."/>
            <person name="Pierard A."/>
            <person name="Piravandi E."/>
            <person name="Planta R.J."/>
            <person name="Pohl T.M."/>
            <person name="Purnelle B."/>
            <person name="Rebischung C."/>
            <person name="Remacha M.A."/>
            <person name="Revuelta J.L."/>
            <person name="Rinke M."/>
            <person name="Saiz J.E."/>
            <person name="Sartorello F."/>
            <person name="Scherens B."/>
            <person name="Sen-Gupta M."/>
            <person name="Soler-Mira A."/>
            <person name="Urbanus J.H.M."/>
            <person name="Valle G."/>
            <person name="Van Dyck L."/>
            <person name="Verhasselt P."/>
            <person name="Vierendeels F."/>
            <person name="Vissers S."/>
            <person name="Voet M."/>
            <person name="Volckaert G."/>
            <person name="Wach A."/>
            <person name="Wambutt R."/>
            <person name="Wedler H."/>
            <person name="Zollner A."/>
            <person name="Hani J."/>
        </authorList>
    </citation>
    <scope>NUCLEOTIDE SEQUENCE [LARGE SCALE GENOMIC DNA]</scope>
    <source>
        <strain>ATCC 204508 / S288c</strain>
    </source>
</reference>
<reference key="2">
    <citation type="journal article" date="2014" name="G3 (Bethesda)">
        <title>The reference genome sequence of Saccharomyces cerevisiae: Then and now.</title>
        <authorList>
            <person name="Engel S.R."/>
            <person name="Dietrich F.S."/>
            <person name="Fisk D.G."/>
            <person name="Binkley G."/>
            <person name="Balakrishnan R."/>
            <person name="Costanzo M.C."/>
            <person name="Dwight S.S."/>
            <person name="Hitz B.C."/>
            <person name="Karra K."/>
            <person name="Nash R.S."/>
            <person name="Weng S."/>
            <person name="Wong E.D."/>
            <person name="Lloyd P."/>
            <person name="Skrzypek M.S."/>
            <person name="Miyasato S.R."/>
            <person name="Simison M."/>
            <person name="Cherry J.M."/>
        </authorList>
    </citation>
    <scope>GENOME REANNOTATION</scope>
    <source>
        <strain>ATCC 204508 / S288c</strain>
    </source>
</reference>
<reference key="3">
    <citation type="journal article" date="2007" name="Genome Res.">
        <title>Approaching a complete repository of sequence-verified protein-encoding clones for Saccharomyces cerevisiae.</title>
        <authorList>
            <person name="Hu Y."/>
            <person name="Rolfs A."/>
            <person name="Bhullar B."/>
            <person name="Murthy T.V.S."/>
            <person name="Zhu C."/>
            <person name="Berger M.F."/>
            <person name="Camargo A.A."/>
            <person name="Kelley F."/>
            <person name="McCarron S."/>
            <person name="Jepson D."/>
            <person name="Richardson A."/>
            <person name="Raphael J."/>
            <person name="Moreira D."/>
            <person name="Taycher E."/>
            <person name="Zuo D."/>
            <person name="Mohr S."/>
            <person name="Kane M.F."/>
            <person name="Williamson J."/>
            <person name="Simpson A.J.G."/>
            <person name="Bulyk M.L."/>
            <person name="Harlow E."/>
            <person name="Marsischky G."/>
            <person name="Kolodner R.D."/>
            <person name="LaBaer J."/>
        </authorList>
    </citation>
    <scope>NUCLEOTIDE SEQUENCE [GENOMIC DNA]</scope>
    <source>
        <strain>ATCC 204508 / S288c</strain>
    </source>
</reference>
<reference key="4">
    <citation type="journal article" date="2002" name="Yeast">
        <title>Functional analysis of yeast gene families involved in metabolism of vitamins B1 and B6.</title>
        <authorList>
            <person name="Rodriguez-Navarro S."/>
            <person name="Llorente B."/>
            <person name="Rodriguez-Manzaneque M.T."/>
            <person name="Ramne A."/>
            <person name="Uber G."/>
            <person name="Marchesan D."/>
            <person name="Dujon B."/>
            <person name="Herrero E."/>
            <person name="Sunnerhagen P."/>
            <person name="Perez-Ortin J.E."/>
        </authorList>
    </citation>
    <scope>PROBABLE FUNCTION</scope>
    <scope>INDUCTION</scope>
    <scope>INTERACTION WITH THI11</scope>
</reference>
<gene>
    <name type="primary">SNZ2</name>
    <name type="ordered locus">YNL333W</name>
    <name type="ORF">N0290</name>
</gene>
<protein>
    <recommendedName>
        <fullName>Probable pyridoxal 5'-phosphate synthase subunit SNZ2</fullName>
        <shortName>PLP synthase subunit SNZ2</shortName>
        <ecNumber>4.3.3.6</ecNumber>
    </recommendedName>
    <alternativeName>
        <fullName>PDX1 homolog 2</fullName>
        <shortName>Pdx1.2</shortName>
    </alternativeName>
</protein>
<comment type="function">
    <text evidence="2">Catalyzes the formation of pyridoxal 5'-phosphate from ribose 5-phosphate (RBP), glyceraldehyde 3-phosphate (G3P) and ammonia. The ammonia is provided by a SNO isoform. Can also use ribulose 5-phosphate and dihydroxyacetone phosphate as substrates, resulting from enzyme-catalyzed isomerization of RBP and G3P, respectively.</text>
</comment>
<comment type="catalytic activity">
    <reaction evidence="2">
        <text>aldehydo-D-ribose 5-phosphate + D-glyceraldehyde 3-phosphate + L-glutamine = pyridoxal 5'-phosphate + L-glutamate + phosphate + 3 H2O + H(+)</text>
        <dbReference type="Rhea" id="RHEA:31507"/>
        <dbReference type="ChEBI" id="CHEBI:15377"/>
        <dbReference type="ChEBI" id="CHEBI:15378"/>
        <dbReference type="ChEBI" id="CHEBI:29985"/>
        <dbReference type="ChEBI" id="CHEBI:43474"/>
        <dbReference type="ChEBI" id="CHEBI:58273"/>
        <dbReference type="ChEBI" id="CHEBI:58359"/>
        <dbReference type="ChEBI" id="CHEBI:59776"/>
        <dbReference type="ChEBI" id="CHEBI:597326"/>
        <dbReference type="EC" id="4.3.3.6"/>
    </reaction>
</comment>
<comment type="pathway">
    <text>Cofactor biosynthesis; pyridoxal 5'-phosphate biosynthesis.</text>
</comment>
<comment type="subunit">
    <text evidence="2 3">Homohexamer (By similarity). Interacts with THI11 (PubMed:12271461).</text>
</comment>
<comment type="induction">
    <text evidence="3">By the absence of external thiamine.</text>
</comment>
<comment type="similarity">
    <text evidence="4">Belongs to the PdxS/SNZ family.</text>
</comment>
<organism>
    <name type="scientific">Saccharomyces cerevisiae (strain ATCC 204508 / S288c)</name>
    <name type="common">Baker's yeast</name>
    <dbReference type="NCBI Taxonomy" id="559292"/>
    <lineage>
        <taxon>Eukaryota</taxon>
        <taxon>Fungi</taxon>
        <taxon>Dikarya</taxon>
        <taxon>Ascomycota</taxon>
        <taxon>Saccharomycotina</taxon>
        <taxon>Saccharomycetes</taxon>
        <taxon>Saccharomycetales</taxon>
        <taxon>Saccharomycetaceae</taxon>
        <taxon>Saccharomyces</taxon>
    </lineage>
</organism>
<sequence>MSEFKVKTGLAQMLKGGVIMDVVTPEQAIIAERAGACAVMALERIPADMRKSGQVCRMSDPRMIKEIMEAVSIPVMAKVRIGHFVEAQILEELQVDYIDESEVLTPADWTHHIEKHNFKVPFVCGAKDLGEALRRINEGAAMIRTKGEAGTGDVSEAVKHITKIKAEIQQYKENLKTESDFAAKATELRVPVDLLKTTLSEGKLPVVNFAAGGVATPADAALLMQLGCEGVFVGSGIFKSSDPEKLACAIVEATTHYDNPAKLLQISSDLGDLMGGISIQSINEAGGKNGARLSEIGW</sequence>
<name>SNZ2_YEAST</name>